<evidence type="ECO:0000255" key="1">
    <source>
        <dbReference type="HAMAP-Rule" id="MF_00099"/>
    </source>
</evidence>
<reference key="1">
    <citation type="journal article" date="2009" name="BMC Genomics">
        <title>Metabolic analysis of the soil microbe Dechloromonas aromatica str. RCB: indications of a surprisingly complex life-style and cryptic anaerobic pathways for aromatic degradation.</title>
        <authorList>
            <person name="Salinero K.K."/>
            <person name="Keller K."/>
            <person name="Feil W.S."/>
            <person name="Feil H."/>
            <person name="Trong S."/>
            <person name="Di Bartolo G."/>
            <person name="Lapidus A."/>
        </authorList>
    </citation>
    <scope>NUCLEOTIDE SEQUENCE [LARGE SCALE GENOMIC DNA]</scope>
    <source>
        <strain>RCB</strain>
    </source>
</reference>
<protein>
    <recommendedName>
        <fullName evidence="1">Protein-glutamate methylesterase/protein-glutamine glutaminase 2</fullName>
        <ecNumber evidence="1">3.1.1.61</ecNumber>
        <ecNumber evidence="1">3.5.1.44</ecNumber>
    </recommendedName>
</protein>
<accession>Q47GX7</accession>
<feature type="chain" id="PRO_0000225456" description="Protein-glutamate methylesterase/protein-glutamine glutaminase 2">
    <location>
        <begin position="1"/>
        <end position="359"/>
    </location>
</feature>
<feature type="domain" description="Response regulatory" evidence="1">
    <location>
        <begin position="6"/>
        <end position="123"/>
    </location>
</feature>
<feature type="domain" description="CheB-type methylesterase" evidence="1">
    <location>
        <begin position="167"/>
        <end position="359"/>
    </location>
</feature>
<feature type="active site" evidence="1">
    <location>
        <position position="179"/>
    </location>
</feature>
<feature type="active site" evidence="1">
    <location>
        <position position="205"/>
    </location>
</feature>
<feature type="active site" evidence="1">
    <location>
        <position position="301"/>
    </location>
</feature>
<feature type="modified residue" description="4-aspartylphosphate" evidence="1">
    <location>
        <position position="57"/>
    </location>
</feature>
<organism>
    <name type="scientific">Dechloromonas aromatica (strain RCB)</name>
    <dbReference type="NCBI Taxonomy" id="159087"/>
    <lineage>
        <taxon>Bacteria</taxon>
        <taxon>Pseudomonadati</taxon>
        <taxon>Pseudomonadota</taxon>
        <taxon>Betaproteobacteria</taxon>
        <taxon>Rhodocyclales</taxon>
        <taxon>Azonexaceae</taxon>
        <taxon>Dechloromonas</taxon>
    </lineage>
</organism>
<proteinExistence type="inferred from homology"/>
<keyword id="KW-0145">Chemotaxis</keyword>
<keyword id="KW-0963">Cytoplasm</keyword>
<keyword id="KW-0378">Hydrolase</keyword>
<keyword id="KW-0597">Phosphoprotein</keyword>
<name>CHEB2_DECAR</name>
<dbReference type="EC" id="3.1.1.61" evidence="1"/>
<dbReference type="EC" id="3.5.1.44" evidence="1"/>
<dbReference type="EMBL" id="CP000089">
    <property type="protein sequence ID" value="AAZ45904.1"/>
    <property type="molecule type" value="Genomic_DNA"/>
</dbReference>
<dbReference type="SMR" id="Q47GX7"/>
<dbReference type="STRING" id="159087.Daro_1148"/>
<dbReference type="KEGG" id="dar:Daro_1148"/>
<dbReference type="eggNOG" id="COG2201">
    <property type="taxonomic scope" value="Bacteria"/>
</dbReference>
<dbReference type="HOGENOM" id="CLU_000445_51_0_4"/>
<dbReference type="OrthoDB" id="9793421at2"/>
<dbReference type="GO" id="GO:0005737">
    <property type="term" value="C:cytoplasm"/>
    <property type="evidence" value="ECO:0007669"/>
    <property type="project" value="UniProtKB-SubCell"/>
</dbReference>
<dbReference type="GO" id="GO:0000156">
    <property type="term" value="F:phosphorelay response regulator activity"/>
    <property type="evidence" value="ECO:0007669"/>
    <property type="project" value="InterPro"/>
</dbReference>
<dbReference type="GO" id="GO:0008984">
    <property type="term" value="F:protein-glutamate methylesterase activity"/>
    <property type="evidence" value="ECO:0007669"/>
    <property type="project" value="UniProtKB-UniRule"/>
</dbReference>
<dbReference type="GO" id="GO:0050568">
    <property type="term" value="F:protein-glutamine glutaminase activity"/>
    <property type="evidence" value="ECO:0007669"/>
    <property type="project" value="UniProtKB-UniRule"/>
</dbReference>
<dbReference type="GO" id="GO:0006935">
    <property type="term" value="P:chemotaxis"/>
    <property type="evidence" value="ECO:0007669"/>
    <property type="project" value="UniProtKB-UniRule"/>
</dbReference>
<dbReference type="CDD" id="cd16432">
    <property type="entry name" value="CheB_Rec"/>
    <property type="match status" value="1"/>
</dbReference>
<dbReference type="CDD" id="cd17541">
    <property type="entry name" value="REC_CheB-like"/>
    <property type="match status" value="1"/>
</dbReference>
<dbReference type="Gene3D" id="3.40.50.2300">
    <property type="match status" value="1"/>
</dbReference>
<dbReference type="Gene3D" id="3.40.50.180">
    <property type="entry name" value="Methylesterase CheB, C-terminal domain"/>
    <property type="match status" value="1"/>
</dbReference>
<dbReference type="HAMAP" id="MF_00099">
    <property type="entry name" value="CheB_chemtxs"/>
    <property type="match status" value="1"/>
</dbReference>
<dbReference type="InterPro" id="IPR008248">
    <property type="entry name" value="CheB-like"/>
</dbReference>
<dbReference type="InterPro" id="IPR035909">
    <property type="entry name" value="CheB_C"/>
</dbReference>
<dbReference type="InterPro" id="IPR011006">
    <property type="entry name" value="CheY-like_superfamily"/>
</dbReference>
<dbReference type="InterPro" id="IPR000673">
    <property type="entry name" value="Sig_transdc_resp-reg_Me-estase"/>
</dbReference>
<dbReference type="InterPro" id="IPR001789">
    <property type="entry name" value="Sig_transdc_resp-reg_receiver"/>
</dbReference>
<dbReference type="NCBIfam" id="NF001965">
    <property type="entry name" value="PRK00742.1"/>
    <property type="match status" value="1"/>
</dbReference>
<dbReference type="NCBIfam" id="NF009206">
    <property type="entry name" value="PRK12555.1"/>
    <property type="match status" value="1"/>
</dbReference>
<dbReference type="PANTHER" id="PTHR42872">
    <property type="entry name" value="PROTEIN-GLUTAMATE METHYLESTERASE/PROTEIN-GLUTAMINE GLUTAMINASE"/>
    <property type="match status" value="1"/>
</dbReference>
<dbReference type="PANTHER" id="PTHR42872:SF6">
    <property type="entry name" value="PROTEIN-GLUTAMATE METHYLESTERASE_PROTEIN-GLUTAMINE GLUTAMINASE"/>
    <property type="match status" value="1"/>
</dbReference>
<dbReference type="Pfam" id="PF01339">
    <property type="entry name" value="CheB_methylest"/>
    <property type="match status" value="1"/>
</dbReference>
<dbReference type="Pfam" id="PF00072">
    <property type="entry name" value="Response_reg"/>
    <property type="match status" value="1"/>
</dbReference>
<dbReference type="PIRSF" id="PIRSF000876">
    <property type="entry name" value="RR_chemtxs_CheB"/>
    <property type="match status" value="1"/>
</dbReference>
<dbReference type="SMART" id="SM00448">
    <property type="entry name" value="REC"/>
    <property type="match status" value="1"/>
</dbReference>
<dbReference type="SUPFAM" id="SSF52172">
    <property type="entry name" value="CheY-like"/>
    <property type="match status" value="1"/>
</dbReference>
<dbReference type="SUPFAM" id="SSF52738">
    <property type="entry name" value="Methylesterase CheB, C-terminal domain"/>
    <property type="match status" value="1"/>
</dbReference>
<dbReference type="PROSITE" id="PS50122">
    <property type="entry name" value="CHEB"/>
    <property type="match status" value="1"/>
</dbReference>
<dbReference type="PROSITE" id="PS50110">
    <property type="entry name" value="RESPONSE_REGULATORY"/>
    <property type="match status" value="1"/>
</dbReference>
<gene>
    <name evidence="1" type="primary">cheB2</name>
    <name type="ordered locus">Daro_1148</name>
</gene>
<comment type="function">
    <text evidence="1">Involved in chemotaxis. Part of a chemotaxis signal transduction system that modulates chemotaxis in response to various stimuli. Catalyzes the demethylation of specific methylglutamate residues introduced into the chemoreceptors (methyl-accepting chemotaxis proteins or MCP) by CheR. Also mediates the irreversible deamidation of specific glutamine residues to glutamic acid.</text>
</comment>
<comment type="catalytic activity">
    <reaction evidence="1">
        <text>[protein]-L-glutamate 5-O-methyl ester + H2O = L-glutamyl-[protein] + methanol + H(+)</text>
        <dbReference type="Rhea" id="RHEA:23236"/>
        <dbReference type="Rhea" id="RHEA-COMP:10208"/>
        <dbReference type="Rhea" id="RHEA-COMP:10311"/>
        <dbReference type="ChEBI" id="CHEBI:15377"/>
        <dbReference type="ChEBI" id="CHEBI:15378"/>
        <dbReference type="ChEBI" id="CHEBI:17790"/>
        <dbReference type="ChEBI" id="CHEBI:29973"/>
        <dbReference type="ChEBI" id="CHEBI:82795"/>
        <dbReference type="EC" id="3.1.1.61"/>
    </reaction>
</comment>
<comment type="catalytic activity">
    <reaction evidence="1">
        <text>L-glutaminyl-[protein] + H2O = L-glutamyl-[protein] + NH4(+)</text>
        <dbReference type="Rhea" id="RHEA:16441"/>
        <dbReference type="Rhea" id="RHEA-COMP:10207"/>
        <dbReference type="Rhea" id="RHEA-COMP:10208"/>
        <dbReference type="ChEBI" id="CHEBI:15377"/>
        <dbReference type="ChEBI" id="CHEBI:28938"/>
        <dbReference type="ChEBI" id="CHEBI:29973"/>
        <dbReference type="ChEBI" id="CHEBI:30011"/>
        <dbReference type="EC" id="3.5.1.44"/>
    </reaction>
</comment>
<comment type="subcellular location">
    <subcellularLocation>
        <location evidence="1">Cytoplasm</location>
    </subcellularLocation>
</comment>
<comment type="domain">
    <text evidence="1">Contains a C-terminal catalytic domain, and an N-terminal region which modulates catalytic activity.</text>
</comment>
<comment type="PTM">
    <text evidence="1">Phosphorylated by CheA. Phosphorylation of the N-terminal regulatory domain activates the methylesterase activity.</text>
</comment>
<comment type="similarity">
    <text evidence="1">Belongs to the CheB family.</text>
</comment>
<sequence>MADKIKVMIVDDSALVRQVVAQALASDPGIEVTDVASDPIFALQKMKVRWPDVLVIDIEMPRMDGITFLKKIMAEHPTPTVICSSLAEKGAQATFEALAAGAVSIITKPKIGLKSFLEDASNDIVQAVRSAARANLRALSASANPAINRPKLSADAMLSTGSHRALERTTDQLVAIGTSTGGTQALEAVLTRLPATAPGIVIVQHMPEKFTAMFAERLDGLCQIEVREARNGDRVLPGLALIAPGGRHMMLKRNGAQYVVDVADGPLINRHKPSVDVLFRSVAKFAGANALGIIMTGMGDDGARGMKEMHDAGAKTIAQDESSCVVFGMPKEAIKLGGVDQTMPLQQIPGAIVGYGKSC</sequence>